<keyword id="KW-0032">Aminotransferase</keyword>
<keyword id="KW-1185">Reference proteome</keyword>
<keyword id="KW-0808">Transferase</keyword>
<protein>
    <recommendedName>
        <fullName evidence="1">Aminomethyltransferase</fullName>
        <ecNumber evidence="1">2.1.2.10</ecNumber>
    </recommendedName>
    <alternativeName>
        <fullName evidence="1">Glycine cleavage system T protein</fullName>
    </alternativeName>
</protein>
<name>GCST_ALCBS</name>
<reference key="1">
    <citation type="journal article" date="2006" name="Nat. Biotechnol.">
        <title>Genome sequence of the ubiquitous hydrocarbon-degrading marine bacterium Alcanivorax borkumensis.</title>
        <authorList>
            <person name="Schneiker S."/>
            <person name="Martins dos Santos V.A.P."/>
            <person name="Bartels D."/>
            <person name="Bekel T."/>
            <person name="Brecht M."/>
            <person name="Buhrmester J."/>
            <person name="Chernikova T.N."/>
            <person name="Denaro R."/>
            <person name="Ferrer M."/>
            <person name="Gertler C."/>
            <person name="Goesmann A."/>
            <person name="Golyshina O.V."/>
            <person name="Kaminski F."/>
            <person name="Khachane A.N."/>
            <person name="Lang S."/>
            <person name="Linke B."/>
            <person name="McHardy A.C."/>
            <person name="Meyer F."/>
            <person name="Nechitaylo T."/>
            <person name="Puehler A."/>
            <person name="Regenhardt D."/>
            <person name="Rupp O."/>
            <person name="Sabirova J.S."/>
            <person name="Selbitschka W."/>
            <person name="Yakimov M.M."/>
            <person name="Timmis K.N."/>
            <person name="Vorhoelter F.-J."/>
            <person name="Weidner S."/>
            <person name="Kaiser O."/>
            <person name="Golyshin P.N."/>
        </authorList>
    </citation>
    <scope>NUCLEOTIDE SEQUENCE [LARGE SCALE GENOMIC DNA]</scope>
    <source>
        <strain>ATCC 700651 / DSM 11573 / NCIMB 13689 / SK2</strain>
    </source>
</reference>
<organism>
    <name type="scientific">Alcanivorax borkumensis (strain ATCC 700651 / DSM 11573 / NCIMB 13689 / SK2)</name>
    <dbReference type="NCBI Taxonomy" id="393595"/>
    <lineage>
        <taxon>Bacteria</taxon>
        <taxon>Pseudomonadati</taxon>
        <taxon>Pseudomonadota</taxon>
        <taxon>Gammaproteobacteria</taxon>
        <taxon>Oceanospirillales</taxon>
        <taxon>Alcanivoracaceae</taxon>
        <taxon>Alcanivorax</taxon>
    </lineage>
</organism>
<dbReference type="EC" id="2.1.2.10" evidence="1"/>
<dbReference type="EMBL" id="AM286690">
    <property type="protein sequence ID" value="CAL18042.1"/>
    <property type="molecule type" value="Genomic_DNA"/>
</dbReference>
<dbReference type="RefSeq" id="WP_011589865.1">
    <property type="nucleotide sequence ID" value="NC_008260.1"/>
</dbReference>
<dbReference type="SMR" id="Q0VLA6"/>
<dbReference type="STRING" id="393595.ABO_2594"/>
<dbReference type="KEGG" id="abo:ABO_2594"/>
<dbReference type="eggNOG" id="COG0404">
    <property type="taxonomic scope" value="Bacteria"/>
</dbReference>
<dbReference type="HOGENOM" id="CLU_007884_10_2_6"/>
<dbReference type="OrthoDB" id="9774591at2"/>
<dbReference type="Proteomes" id="UP000008871">
    <property type="component" value="Chromosome"/>
</dbReference>
<dbReference type="GO" id="GO:0005829">
    <property type="term" value="C:cytosol"/>
    <property type="evidence" value="ECO:0007669"/>
    <property type="project" value="TreeGrafter"/>
</dbReference>
<dbReference type="GO" id="GO:0005960">
    <property type="term" value="C:glycine cleavage complex"/>
    <property type="evidence" value="ECO:0007669"/>
    <property type="project" value="InterPro"/>
</dbReference>
<dbReference type="GO" id="GO:0004047">
    <property type="term" value="F:aminomethyltransferase activity"/>
    <property type="evidence" value="ECO:0007669"/>
    <property type="project" value="UniProtKB-UniRule"/>
</dbReference>
<dbReference type="GO" id="GO:0008483">
    <property type="term" value="F:transaminase activity"/>
    <property type="evidence" value="ECO:0007669"/>
    <property type="project" value="UniProtKB-KW"/>
</dbReference>
<dbReference type="GO" id="GO:0019464">
    <property type="term" value="P:glycine decarboxylation via glycine cleavage system"/>
    <property type="evidence" value="ECO:0007669"/>
    <property type="project" value="UniProtKB-UniRule"/>
</dbReference>
<dbReference type="FunFam" id="3.30.70.1400:FF:000001">
    <property type="entry name" value="Aminomethyltransferase"/>
    <property type="match status" value="1"/>
</dbReference>
<dbReference type="FunFam" id="4.10.1250.10:FF:000001">
    <property type="entry name" value="Aminomethyltransferase"/>
    <property type="match status" value="1"/>
</dbReference>
<dbReference type="Gene3D" id="2.40.30.110">
    <property type="entry name" value="Aminomethyltransferase beta-barrel domains"/>
    <property type="match status" value="1"/>
</dbReference>
<dbReference type="Gene3D" id="3.30.70.1400">
    <property type="entry name" value="Aminomethyltransferase beta-barrel domains"/>
    <property type="match status" value="1"/>
</dbReference>
<dbReference type="Gene3D" id="4.10.1250.10">
    <property type="entry name" value="Aminomethyltransferase fragment"/>
    <property type="match status" value="1"/>
</dbReference>
<dbReference type="Gene3D" id="3.30.1360.120">
    <property type="entry name" value="Probable tRNA modification gtpase trme, domain 1"/>
    <property type="match status" value="1"/>
</dbReference>
<dbReference type="HAMAP" id="MF_00259">
    <property type="entry name" value="GcvT"/>
    <property type="match status" value="1"/>
</dbReference>
<dbReference type="InterPro" id="IPR006223">
    <property type="entry name" value="GCS_T"/>
</dbReference>
<dbReference type="InterPro" id="IPR022903">
    <property type="entry name" value="GCS_T_bac"/>
</dbReference>
<dbReference type="InterPro" id="IPR013977">
    <property type="entry name" value="GCST_C"/>
</dbReference>
<dbReference type="InterPro" id="IPR006222">
    <property type="entry name" value="GCV_T_N"/>
</dbReference>
<dbReference type="InterPro" id="IPR028896">
    <property type="entry name" value="GcvT/YgfZ/DmdA"/>
</dbReference>
<dbReference type="InterPro" id="IPR029043">
    <property type="entry name" value="GcvT/YgfZ_C"/>
</dbReference>
<dbReference type="InterPro" id="IPR027266">
    <property type="entry name" value="TrmE/GcvT_dom1"/>
</dbReference>
<dbReference type="NCBIfam" id="TIGR00528">
    <property type="entry name" value="gcvT"/>
    <property type="match status" value="1"/>
</dbReference>
<dbReference type="NCBIfam" id="NF001567">
    <property type="entry name" value="PRK00389.1"/>
    <property type="match status" value="1"/>
</dbReference>
<dbReference type="PANTHER" id="PTHR43757">
    <property type="entry name" value="AMINOMETHYLTRANSFERASE"/>
    <property type="match status" value="1"/>
</dbReference>
<dbReference type="PANTHER" id="PTHR43757:SF2">
    <property type="entry name" value="AMINOMETHYLTRANSFERASE, MITOCHONDRIAL"/>
    <property type="match status" value="1"/>
</dbReference>
<dbReference type="Pfam" id="PF01571">
    <property type="entry name" value="GCV_T"/>
    <property type="match status" value="1"/>
</dbReference>
<dbReference type="Pfam" id="PF08669">
    <property type="entry name" value="GCV_T_C"/>
    <property type="match status" value="1"/>
</dbReference>
<dbReference type="PIRSF" id="PIRSF006487">
    <property type="entry name" value="GcvT"/>
    <property type="match status" value="1"/>
</dbReference>
<dbReference type="SUPFAM" id="SSF101790">
    <property type="entry name" value="Aminomethyltransferase beta-barrel domain"/>
    <property type="match status" value="1"/>
</dbReference>
<dbReference type="SUPFAM" id="SSF103025">
    <property type="entry name" value="Folate-binding domain"/>
    <property type="match status" value="1"/>
</dbReference>
<accession>Q0VLA6</accession>
<comment type="function">
    <text evidence="1">The glycine cleavage system catalyzes the degradation of glycine.</text>
</comment>
<comment type="catalytic activity">
    <reaction evidence="1">
        <text>N(6)-[(R)-S(8)-aminomethyldihydrolipoyl]-L-lysyl-[protein] + (6S)-5,6,7,8-tetrahydrofolate = N(6)-[(R)-dihydrolipoyl]-L-lysyl-[protein] + (6R)-5,10-methylene-5,6,7,8-tetrahydrofolate + NH4(+)</text>
        <dbReference type="Rhea" id="RHEA:16945"/>
        <dbReference type="Rhea" id="RHEA-COMP:10475"/>
        <dbReference type="Rhea" id="RHEA-COMP:10492"/>
        <dbReference type="ChEBI" id="CHEBI:15636"/>
        <dbReference type="ChEBI" id="CHEBI:28938"/>
        <dbReference type="ChEBI" id="CHEBI:57453"/>
        <dbReference type="ChEBI" id="CHEBI:83100"/>
        <dbReference type="ChEBI" id="CHEBI:83143"/>
        <dbReference type="EC" id="2.1.2.10"/>
    </reaction>
</comment>
<comment type="subunit">
    <text evidence="1">The glycine cleavage system is composed of four proteins: P, T, L and H.</text>
</comment>
<comment type="similarity">
    <text evidence="1">Belongs to the GcvT family.</text>
</comment>
<evidence type="ECO:0000255" key="1">
    <source>
        <dbReference type="HAMAP-Rule" id="MF_00259"/>
    </source>
</evidence>
<feature type="chain" id="PRO_1000047643" description="Aminomethyltransferase">
    <location>
        <begin position="1"/>
        <end position="359"/>
    </location>
</feature>
<proteinExistence type="inferred from homology"/>
<sequence length="359" mass="39186">MAHRTALYDAHLAAGGKMVDFGGWDMPINYGSQIEEHHAVRQNAGVFDVSHMTVVDIAGAGARDYLRQLLANDVDRIDPGRALYTGMLNDNGGVIDDLIVYKRDNDYRLVVNCATRETDLGWMEKHAGGFAVDIHERPELAMLAIQGPKARDILAGLLNGSRADAVKSLKVFAFAEDGDWMIARTGYTGEDGVEIMLPNADALTLWEQLLEAGVSPIGLGARDTLRLEAGLNLYGNDMDESITPWEANMGWTVMLNDREFIGRQPLLNQKENGHSEQVGLILEGKGVLRAHQKVLMPNGEEGEITSGTFSPTLGKSIALARLPAGATGKVDVEIRNKRQVAQVVKPPFVRNGNAVYKEQ</sequence>
<gene>
    <name evidence="1" type="primary">gcvT</name>
    <name type="ordered locus">ABO_2594</name>
</gene>